<comment type="function">
    <text evidence="2 3">Component of the telomerase ribonucleoprotein complex that is essential for the replication of chromosome termini (By similarity). Also a component of the ribonucleoprotein vaults particle, a multi-subunit structure involved in nucleo-cytoplasmic transport. Responsible for the localizing and stabilizing vault RNA (vRNA) association in the vault ribonucleoprotein particle. Binds to TERC (By similarity).</text>
</comment>
<comment type="subunit">
    <text evidence="2 3">Associated component of the telomerase holoenzyme complex (By similarity). Component of the vault ribonucleoprotein particle, at least composed of MVP, PARP4 and one or more vault RNAs (vRNAs). Binds to VAULTRC1, VAULTRC2 and VAULTRC4/hvg4 vRNAs (By similarity).</text>
</comment>
<comment type="subcellular location">
    <subcellularLocation>
        <location evidence="1">Nucleus</location>
    </subcellularLocation>
    <subcellularLocation>
        <location evidence="1">Chromosome</location>
        <location evidence="1">Telomere</location>
    </subcellularLocation>
</comment>
<feature type="chain" id="PRO_0000050984" description="Telomerase protein component 1">
    <location>
        <begin position="1"/>
        <end position="2629"/>
    </location>
</feature>
<feature type="repeat" description="TEP1 N-terminal 1" evidence="7 9">
    <location>
        <begin position="1"/>
        <end position="30"/>
    </location>
</feature>
<feature type="repeat" description="TEP1 N-terminal 2" evidence="7 9">
    <location>
        <begin position="31"/>
        <end position="60"/>
    </location>
</feature>
<feature type="repeat" description="TEP1 N-terminal 3" evidence="7 9">
    <location>
        <begin position="61"/>
        <end position="90"/>
    </location>
</feature>
<feature type="repeat" description="TEP1 N-terminal 4" evidence="7 9">
    <location>
        <begin position="91"/>
        <end position="120"/>
    </location>
</feature>
<feature type="domain" description="TROVE" evidence="6">
    <location>
        <begin position="231"/>
        <end position="689"/>
    </location>
</feature>
<feature type="domain" description="NACHT" evidence="4">
    <location>
        <begin position="1175"/>
        <end position="1582"/>
    </location>
</feature>
<feature type="repeat" description="WD 1" evidence="5 9">
    <location>
        <begin position="1424"/>
        <end position="1461"/>
    </location>
</feature>
<feature type="repeat" description="WD 2" evidence="5 9">
    <location>
        <begin position="1685"/>
        <end position="1724"/>
    </location>
</feature>
<feature type="repeat" description="WD 3" evidence="5 9">
    <location>
        <begin position="1727"/>
        <end position="1765"/>
    </location>
</feature>
<feature type="repeat" description="WD 4" evidence="5 9">
    <location>
        <begin position="1768"/>
        <end position="1807"/>
    </location>
</feature>
<feature type="repeat" description="WD 5" evidence="5 9">
    <location>
        <begin position="1809"/>
        <end position="1848"/>
    </location>
</feature>
<feature type="repeat" description="WD 6" evidence="5 9">
    <location>
        <begin position="1851"/>
        <end position="1890"/>
    </location>
</feature>
<feature type="repeat" description="WD 7" evidence="5 9">
    <location>
        <begin position="1893"/>
        <end position="1934"/>
    </location>
</feature>
<feature type="repeat" description="WD 8" evidence="5 9">
    <location>
        <begin position="1936"/>
        <end position="1975"/>
    </location>
</feature>
<feature type="repeat" description="WD 9" evidence="5 9">
    <location>
        <begin position="1978"/>
        <end position="2016"/>
    </location>
</feature>
<feature type="repeat" description="WD 10" evidence="5 9">
    <location>
        <begin position="2019"/>
        <end position="2058"/>
    </location>
</feature>
<feature type="repeat" description="WD 11" evidence="5 9">
    <location>
        <begin position="2070"/>
        <end position="2109"/>
    </location>
</feature>
<feature type="repeat" description="WD 12" evidence="5 9">
    <location>
        <begin position="2116"/>
        <end position="2154"/>
    </location>
</feature>
<feature type="repeat" description="WD 13" evidence="5 9">
    <location>
        <begin position="2157"/>
        <end position="2194"/>
    </location>
</feature>
<feature type="repeat" description="WD 14" evidence="5 9">
    <location>
        <begin position="2200"/>
        <end position="2244"/>
    </location>
</feature>
<feature type="repeat" description="WD 15" evidence="5 9">
    <location>
        <begin position="2247"/>
        <end position="2285"/>
    </location>
</feature>
<feature type="repeat" description="WD 16" evidence="5 9">
    <location>
        <begin position="2288"/>
        <end position="2327"/>
    </location>
</feature>
<feature type="repeat" description="WD 17" evidence="5 9">
    <location>
        <begin position="2329"/>
        <end position="2365"/>
    </location>
</feature>
<feature type="repeat" description="WD 18" evidence="5 9">
    <location>
        <begin position="2378"/>
        <end position="2427"/>
    </location>
</feature>
<feature type="repeat" description="WD 19" evidence="5 9">
    <location>
        <begin position="2470"/>
        <end position="2510"/>
    </location>
</feature>
<feature type="repeat" description="WD 20" evidence="5 9">
    <location>
        <begin position="2555"/>
        <end position="2592"/>
    </location>
</feature>
<feature type="repeat" description="WD 21" evidence="5 9">
    <location>
        <begin position="2594"/>
        <end position="2628"/>
    </location>
</feature>
<feature type="region of interest" description="Disordered" evidence="8">
    <location>
        <begin position="390"/>
        <end position="416"/>
    </location>
</feature>
<feature type="compositionally biased region" description="Basic residues" evidence="8">
    <location>
        <begin position="390"/>
        <end position="401"/>
    </location>
</feature>
<feature type="binding site" evidence="4">
    <location>
        <begin position="1181"/>
        <end position="1188"/>
    </location>
    <ligand>
        <name>ATP</name>
        <dbReference type="ChEBI" id="CHEBI:30616"/>
    </ligand>
</feature>
<gene>
    <name type="primary">Tep1</name>
    <name type="synonym">Tlp1</name>
</gene>
<sequence length="2629" mass="291708">MEKLCGYVPVHPDILSLKNRCLTMLSDIQPLEKIHGQRSVNPDILSLENRCLTLLPDLQPMEKIHGQRSVHPDILSSENRCLTLLPDLQSLEKLCGHMSSHPDVLSLENRCLATLPTVKRTVSSGPLLQCLHRSHTAQADLRDPNFRNCLFPEPPTIEAPCFLKELDLPTGPRALKSMSATARVQEVALGQRCVSEGKELQEEKESAEVPMPLYSLSLGGEEEEVVGAPVLKLTSGDSDSHPETTDQILQEKKMALLTLLCSAMASSVNVKDASDPTRASIHEVCSALAPLEPEFILKASLYARQQLNLRDIANIVLAVAALLPACRPHVRRYYSAIVHLPSDWIQVAEFYQSLAEGDEKKLVPLPACLRAAMTDKFAQFDEYQLAKYNPRKHRSKTRSRQPPRPQRTKPPFSESGKCFPKSVWPLKNEQISFEAAYNAVSEKKRLPRFTLKKLVEQLHIHEPAQHVQALLGYRYPSTLELFSRSHLPGPWDSSRAGQRMKLQRPETWERELSLRGNRASVWEELIDNGKLPFMAMLRNLCNLLRTGISAHHHELVLQRLQHEKSVIHSRQFPFRFLNAHDSLDRLEAQLRSKASPFPSNTTLMKRIMIRNSKKIKRPANPRYLCTLTQRQLRAAMAIPVMYEHLKREKLRLHKARQWTCDLELLERYRQALETAVNISVKHNLPPLPGRTLLVYLTDANANRLCPKSHLQGPPLNYVLLLIGMMMARAEQTTVWLCGTGTVKTPVLTADEGILKTAIKLQAQVQELEENDEWPLETFEKYLLSLAVRRTPIDRVILFGQRMDTELLNVAKQIIWQHVNSKCLFVSVLLRKMQYMSPNLNPNDVTLSGCTDGILKFIAEHGASRLLEHVGQLDKIFKIPPPPGKTKVSPLRPLEENNPGPFVPISQHGWRNIRLFISSTFRDMHGERDLLMRSVLPALQARAFPHRISLHAIDLRWGITEEETRRNRQLEVCLGEVENSQLFVGILGSRYGYTPPSYDLPDHPHFHWTQRYPSGRSVTEMEVMQFLNRGQRSEPSDQALIYFRDPGFLSSVPDVWKPDFISESEEAAHRVSELKRFLQEQKEVTCRRYSCEWGGVAAGRPYTGGLEEFGQLVLQDVWSVIQKRYLQPGAQLEQPGSISEEDLIQASFQQLKSPPSPARPRLLQDTVQQLMLPHGRLSLVIGQAGQGKTAFLASLVSALKVPDQPNVAPFVFFHFSAARPDQCLAFNLLRRLCTHLHQKLGEPSALPSTYRGLVWELQQKLLLKSAQWLQPGQTLVLIIDGADKLVDHNGQLISDWIPKSLPRRVHLVLSVSSDSGLGETLQQSQSAYVVALGSLVPSSRAQLVREELALYGKRLEESPFNNQMRLLLAKQGSSLPLYLHLVTDYLRLFTLYEQVSERLRTLPATLPLLLQHILSTLEQEHGHNVLPQALTALEVTHSGLTVDQLHAVLSTWLTLPKETKSWEEAVAASHSGNLYPLAPFAYLVQSLRSLLGEGPVERPGARLCLSDGPLRTAVKRRYGKRLGLEKTAHVLIAAHLWKMCDPDASGTFRSCPPEALKDLPYHLLQSGNHGLLAKFLTNLHVVAAYLEVGLVPDLLEAYELYASSKPEVNQKLPEADVAVFHNFLKQQASLLTQYPLLLLQQAASQPEESPVCCQAPLLTQRWHNQCILKWINKPQTLKGQQSLSLPISSSPTAVAFSPNGQRAAVGTAGGTIYLLNLRTWQEEKALVSGCDGISSFAFLSDTALFLTTFDGLLELWDLQHGCWVFQTKAHQYQITGCCLSPDRRLLATVCLGGYVKLWDTVQGQLAFQYTHPKSLNCITFHPEGQVVATGNWSGIVTFFQADGLKVTKELGGPGPSVRTLAFSAPGKVVALGRIDGTVELWAWQEGTRLAAFPAQCGGVSTVLFLHAGGRFLTAGEDGKAQLWSGFLGRPRGCLGSLYLSPALSVALNPDGDQVAVGYRGDGIKIYRISSGPQEAQCQELNVAVSALVWLSPSVLVSGAEDGSLHGWMLRRNSLQSLWLSSVCQKPVLGLAASQEFLASASEDFTVRLWPRQLLTQPHAVEELPCAAELRGHEGPVCCCSFSPDGRILATAGRDRNLLCWDVKVAQAPLLIHTFSSCHRDWITGCTWTKDNILISCSSDGSVGLWNPEAGQQLGQFPGHQSAVSAVVAVEEHIVSVSRDGTLKVWDRQGVELTSIPAHSGPISQCAAALEPRPAGQPGSELMVVTVGLDGATKLWHPLLVCQIHTLQGHSGPVTAAAASEASGLLLTSDNSSVRLWQIPKEADDTCKPRSSAVITAVAWAPDGSLVVSGNEAGELTLWQKAQAVATARAPGRVSDLIWCSANAFFVLSANENVSEWQVELRKGSTCTNFRLYLKRVLQEDLGVLTGMALAPDGQSLILMKEDVELLQMKPGSTPSSICRRYAVHSSILCTSKDYGLFYLQQGNSGSLSILEQEESGKFEKTLDFNLNLNNPNGSPVSITQAEPESGSSLLCATSDGMLWNLSECTPEGEWVVDNIWQKKSRNPKSRTPGTDSSPGLFCMDSWVEPTHLKARQCKKIHLGSVTALHVLPGLLVTASEDRDVKLWERPSMQLLGLFRCEGPVSCLEPWMEPSSPLQLAVGDAQGNLYFLSWE</sequence>
<keyword id="KW-0067">ATP-binding</keyword>
<keyword id="KW-0158">Chromosome</keyword>
<keyword id="KW-0547">Nucleotide-binding</keyword>
<keyword id="KW-0539">Nucleus</keyword>
<keyword id="KW-1185">Reference proteome</keyword>
<keyword id="KW-0677">Repeat</keyword>
<keyword id="KW-0687">Ribonucleoprotein</keyword>
<keyword id="KW-0694">RNA-binding</keyword>
<keyword id="KW-0779">Telomere</keyword>
<keyword id="KW-0853">WD repeat</keyword>
<accession>O08653</accession>
<protein>
    <recommendedName>
        <fullName>Telomerase protein component 1</fullName>
        <shortName>rTLP1</shortName>
    </recommendedName>
    <alternativeName>
        <fullName>Telomerase-associated protein 1</fullName>
        <shortName>Telomerase protein 1</shortName>
    </alternativeName>
    <alternativeName>
        <fullName>p230</fullName>
    </alternativeName>
    <alternativeName>
        <fullName>p240</fullName>
    </alternativeName>
    <alternativeName>
        <fullName>p80 telomerase homolog</fullName>
    </alternativeName>
</protein>
<evidence type="ECO:0000250" key="1"/>
<evidence type="ECO:0000250" key="2">
    <source>
        <dbReference type="UniProtKB" id="P97499"/>
    </source>
</evidence>
<evidence type="ECO:0000250" key="3">
    <source>
        <dbReference type="UniProtKB" id="Q99973"/>
    </source>
</evidence>
<evidence type="ECO:0000255" key="4">
    <source>
        <dbReference type="PROSITE-ProRule" id="PRU00136"/>
    </source>
</evidence>
<evidence type="ECO:0000255" key="5">
    <source>
        <dbReference type="PROSITE-ProRule" id="PRU00221"/>
    </source>
</evidence>
<evidence type="ECO:0000255" key="6">
    <source>
        <dbReference type="PROSITE-ProRule" id="PRU00343"/>
    </source>
</evidence>
<evidence type="ECO:0000255" key="7">
    <source>
        <dbReference type="PROSITE-ProRule" id="PRU00575"/>
    </source>
</evidence>
<evidence type="ECO:0000256" key="8">
    <source>
        <dbReference type="SAM" id="MobiDB-lite"/>
    </source>
</evidence>
<evidence type="ECO:0000269" key="9">
    <source>
    </source>
</evidence>
<dbReference type="EMBL" id="U89282">
    <property type="protein sequence ID" value="AAB51690.1"/>
    <property type="molecule type" value="mRNA"/>
</dbReference>
<dbReference type="PIR" id="T32735">
    <property type="entry name" value="T32735"/>
</dbReference>
<dbReference type="RefSeq" id="NP_072113.1">
    <property type="nucleotide sequence ID" value="NM_022591.2"/>
</dbReference>
<dbReference type="FunCoup" id="O08653">
    <property type="interactions" value="255"/>
</dbReference>
<dbReference type="STRING" id="10116.ENSRNOP00000068552"/>
<dbReference type="CarbonylDB" id="O08653"/>
<dbReference type="GlyGen" id="O08653">
    <property type="glycosylation" value="1 site"/>
</dbReference>
<dbReference type="iPTMnet" id="O08653"/>
<dbReference type="PhosphoSitePlus" id="O08653"/>
<dbReference type="PaxDb" id="10116-ENSRNOP00000012235"/>
<dbReference type="GeneID" id="64523"/>
<dbReference type="KEGG" id="rno:64523"/>
<dbReference type="UCSC" id="RGD:3869">
    <property type="organism name" value="rat"/>
</dbReference>
<dbReference type="AGR" id="RGD:3869"/>
<dbReference type="CTD" id="7011"/>
<dbReference type="RGD" id="3869">
    <property type="gene designation" value="Tep1"/>
</dbReference>
<dbReference type="eggNOG" id="KOG3602">
    <property type="taxonomic scope" value="Eukaryota"/>
</dbReference>
<dbReference type="eggNOG" id="KOG4155">
    <property type="taxonomic scope" value="Eukaryota"/>
</dbReference>
<dbReference type="InParanoid" id="O08653"/>
<dbReference type="OrthoDB" id="41113at9989"/>
<dbReference type="PhylomeDB" id="O08653"/>
<dbReference type="PRO" id="PR:O08653"/>
<dbReference type="Proteomes" id="UP000002494">
    <property type="component" value="Unplaced"/>
</dbReference>
<dbReference type="GO" id="GO:0000781">
    <property type="term" value="C:chromosome, telomeric region"/>
    <property type="evidence" value="ECO:0007669"/>
    <property type="project" value="UniProtKB-SubCell"/>
</dbReference>
<dbReference type="GO" id="GO:0005737">
    <property type="term" value="C:cytoplasm"/>
    <property type="evidence" value="ECO:0000266"/>
    <property type="project" value="RGD"/>
</dbReference>
<dbReference type="GO" id="GO:0016363">
    <property type="term" value="C:nuclear matrix"/>
    <property type="evidence" value="ECO:0000266"/>
    <property type="project" value="RGD"/>
</dbReference>
<dbReference type="GO" id="GO:1990904">
    <property type="term" value="C:ribonucleoprotein complex"/>
    <property type="evidence" value="ECO:0000314"/>
    <property type="project" value="RGD"/>
</dbReference>
<dbReference type="GO" id="GO:0005697">
    <property type="term" value="C:telomerase holoenzyme complex"/>
    <property type="evidence" value="ECO:0000314"/>
    <property type="project" value="BHF-UCL"/>
</dbReference>
<dbReference type="GO" id="GO:0005524">
    <property type="term" value="F:ATP binding"/>
    <property type="evidence" value="ECO:0007669"/>
    <property type="project" value="UniProtKB-KW"/>
</dbReference>
<dbReference type="GO" id="GO:0019899">
    <property type="term" value="F:enzyme binding"/>
    <property type="evidence" value="ECO:0000266"/>
    <property type="project" value="RGD"/>
</dbReference>
<dbReference type="GO" id="GO:0002039">
    <property type="term" value="F:p53 binding"/>
    <property type="evidence" value="ECO:0000266"/>
    <property type="project" value="RGD"/>
</dbReference>
<dbReference type="GO" id="GO:0003723">
    <property type="term" value="F:RNA binding"/>
    <property type="evidence" value="ECO:0000266"/>
    <property type="project" value="RGD"/>
</dbReference>
<dbReference type="GO" id="GO:0070034">
    <property type="term" value="F:telomerase RNA binding"/>
    <property type="evidence" value="ECO:0000266"/>
    <property type="project" value="RGD"/>
</dbReference>
<dbReference type="GO" id="GO:0006278">
    <property type="term" value="P:RNA-templated DNA biosynthetic process"/>
    <property type="evidence" value="ECO:0000305"/>
    <property type="project" value="BHF-UCL"/>
</dbReference>
<dbReference type="GO" id="GO:0000722">
    <property type="term" value="P:telomere maintenance via recombination"/>
    <property type="evidence" value="ECO:0000266"/>
    <property type="project" value="RGD"/>
</dbReference>
<dbReference type="CDD" id="cd00200">
    <property type="entry name" value="WD40"/>
    <property type="match status" value="1"/>
</dbReference>
<dbReference type="FunFam" id="1.25.40.370:FF:000002">
    <property type="entry name" value="Telomerase associated protein 1"/>
    <property type="match status" value="1"/>
</dbReference>
<dbReference type="FunFam" id="2.130.10.10:FF:000636">
    <property type="entry name" value="Telomerase protein component 1"/>
    <property type="match status" value="1"/>
</dbReference>
<dbReference type="FunFam" id="2.130.10.10:FF:000691">
    <property type="entry name" value="Telomerase protein component 1"/>
    <property type="match status" value="1"/>
</dbReference>
<dbReference type="FunFam" id="2.130.10.10:FF:002153">
    <property type="entry name" value="Telomerase protein component 1"/>
    <property type="match status" value="1"/>
</dbReference>
<dbReference type="FunFam" id="2.130.10.10:FF:002164">
    <property type="entry name" value="Telomerase protein component 1"/>
    <property type="match status" value="1"/>
</dbReference>
<dbReference type="FunFam" id="3.40.50.300:FF:004068">
    <property type="entry name" value="Telomerase protein component 1"/>
    <property type="match status" value="1"/>
</dbReference>
<dbReference type="Gene3D" id="1.25.40.370">
    <property type="match status" value="1"/>
</dbReference>
<dbReference type="Gene3D" id="3.40.50.300">
    <property type="entry name" value="P-loop containing nucleotide triphosphate hydrolases"/>
    <property type="match status" value="1"/>
</dbReference>
<dbReference type="Gene3D" id="2.130.10.10">
    <property type="entry name" value="YVTN repeat-like/Quinoprotein amine dehydrogenase"/>
    <property type="match status" value="6"/>
</dbReference>
<dbReference type="InterPro" id="IPR056829">
    <property type="entry name" value="Beta-prop_TEP1_2nd"/>
</dbReference>
<dbReference type="InterPro" id="IPR056828">
    <property type="entry name" value="Beta-prop_TEP1_C"/>
</dbReference>
<dbReference type="InterPro" id="IPR025139">
    <property type="entry name" value="DUF4062"/>
</dbReference>
<dbReference type="InterPro" id="IPR045804">
    <property type="entry name" value="DUF5920"/>
</dbReference>
<dbReference type="InterPro" id="IPR007111">
    <property type="entry name" value="NACHT_NTPase"/>
</dbReference>
<dbReference type="InterPro" id="IPR027417">
    <property type="entry name" value="P-loop_NTPase"/>
</dbReference>
<dbReference type="InterPro" id="IPR052652">
    <property type="entry name" value="Telomerase_Complex_Comp"/>
</dbReference>
<dbReference type="InterPro" id="IPR008850">
    <property type="entry name" value="TEP1_N"/>
</dbReference>
<dbReference type="InterPro" id="IPR008858">
    <property type="entry name" value="TROVE_dom"/>
</dbReference>
<dbReference type="InterPro" id="IPR037214">
    <property type="entry name" value="TROVE_dom_sf"/>
</dbReference>
<dbReference type="InterPro" id="IPR015943">
    <property type="entry name" value="WD40/YVTN_repeat-like_dom_sf"/>
</dbReference>
<dbReference type="InterPro" id="IPR036322">
    <property type="entry name" value="WD40_repeat_dom_sf"/>
</dbReference>
<dbReference type="InterPro" id="IPR001680">
    <property type="entry name" value="WD40_rpt"/>
</dbReference>
<dbReference type="PANTHER" id="PTHR44791:SF1">
    <property type="entry name" value="TELOMERASE PROTEIN COMPONENT 1"/>
    <property type="match status" value="1"/>
</dbReference>
<dbReference type="PANTHER" id="PTHR44791">
    <property type="entry name" value="TELOMERASE PROTEIN COMPONENT 1 TEP1"/>
    <property type="match status" value="1"/>
</dbReference>
<dbReference type="Pfam" id="PF25047">
    <property type="entry name" value="Beta-prop_TEP1_2nd"/>
    <property type="match status" value="1"/>
</dbReference>
<dbReference type="Pfam" id="PF25048">
    <property type="entry name" value="Beta-prop_TEP1_C"/>
    <property type="match status" value="1"/>
</dbReference>
<dbReference type="Pfam" id="PF13271">
    <property type="entry name" value="DUF4062"/>
    <property type="match status" value="1"/>
</dbReference>
<dbReference type="Pfam" id="PF19334">
    <property type="entry name" value="DUF5920"/>
    <property type="match status" value="1"/>
</dbReference>
<dbReference type="Pfam" id="PF05729">
    <property type="entry name" value="NACHT"/>
    <property type="match status" value="1"/>
</dbReference>
<dbReference type="Pfam" id="PF05386">
    <property type="entry name" value="TEP1_N"/>
    <property type="match status" value="4"/>
</dbReference>
<dbReference type="Pfam" id="PF05731">
    <property type="entry name" value="TROVE"/>
    <property type="match status" value="1"/>
</dbReference>
<dbReference type="Pfam" id="PF00400">
    <property type="entry name" value="WD40"/>
    <property type="match status" value="4"/>
</dbReference>
<dbReference type="SMART" id="SM00320">
    <property type="entry name" value="WD40"/>
    <property type="match status" value="16"/>
</dbReference>
<dbReference type="SUPFAM" id="SSF52540">
    <property type="entry name" value="P-loop containing nucleoside triphosphate hydrolases"/>
    <property type="match status" value="1"/>
</dbReference>
<dbReference type="SUPFAM" id="SSF140864">
    <property type="entry name" value="TROVE domain-like"/>
    <property type="match status" value="1"/>
</dbReference>
<dbReference type="SUPFAM" id="SSF50978">
    <property type="entry name" value="WD40 repeat-like"/>
    <property type="match status" value="4"/>
</dbReference>
<dbReference type="PROSITE" id="PS50837">
    <property type="entry name" value="NACHT"/>
    <property type="match status" value="1"/>
</dbReference>
<dbReference type="PROSITE" id="PS51226">
    <property type="entry name" value="TEP1_N"/>
    <property type="match status" value="4"/>
</dbReference>
<dbReference type="PROSITE" id="PS50988">
    <property type="entry name" value="TROVE"/>
    <property type="match status" value="1"/>
</dbReference>
<dbReference type="PROSITE" id="PS00678">
    <property type="entry name" value="WD_REPEATS_1"/>
    <property type="match status" value="1"/>
</dbReference>
<dbReference type="PROSITE" id="PS50082">
    <property type="entry name" value="WD_REPEATS_2"/>
    <property type="match status" value="7"/>
</dbReference>
<dbReference type="PROSITE" id="PS50294">
    <property type="entry name" value="WD_REPEATS_REGION"/>
    <property type="match status" value="2"/>
</dbReference>
<organism>
    <name type="scientific">Rattus norvegicus</name>
    <name type="common">Rat</name>
    <dbReference type="NCBI Taxonomy" id="10116"/>
    <lineage>
        <taxon>Eukaryota</taxon>
        <taxon>Metazoa</taxon>
        <taxon>Chordata</taxon>
        <taxon>Craniata</taxon>
        <taxon>Vertebrata</taxon>
        <taxon>Euteleostomi</taxon>
        <taxon>Mammalia</taxon>
        <taxon>Eutheria</taxon>
        <taxon>Euarchontoglires</taxon>
        <taxon>Glires</taxon>
        <taxon>Rodentia</taxon>
        <taxon>Myomorpha</taxon>
        <taxon>Muroidea</taxon>
        <taxon>Muridae</taxon>
        <taxon>Murinae</taxon>
        <taxon>Rattus</taxon>
    </lineage>
</organism>
<name>TEP1_RAT</name>
<reference key="1">
    <citation type="journal article" date="1997" name="Cell">
        <title>TLP1: a gene encoding a protein component of mammalian telomerase is a novel member of WD repeats family.</title>
        <authorList>
            <person name="Nakayama J."/>
            <person name="Saito M."/>
            <person name="Nakamura H."/>
            <person name="Matsuura A."/>
            <person name="Ishikawa F."/>
        </authorList>
    </citation>
    <scope>NUCLEOTIDE SEQUENCE [MRNA]</scope>
    <scope>IDENTIFICATION IN THE TELOMERASE RIBONUCLEOPROTEIN COMPLEX</scope>
    <source>
        <strain>Fischer 344</strain>
        <tissue>Fibroblast</tissue>
    </source>
</reference>
<reference key="2">
    <citation type="journal article" date="1999" name="J. Biol. Chem.">
        <title>Vaults and telomerase share a common subunit, TEP1.</title>
        <authorList>
            <person name="Kickhoefer V.A."/>
            <person name="Stephen A.G."/>
            <person name="Harrington L."/>
            <person name="Robinson M.O."/>
            <person name="Rome L.H."/>
        </authorList>
    </citation>
    <scope>IDENTIFICATION IN THE VAULTS RIBONUCLEOPROTEIN PARTICLE</scope>
</reference>
<reference key="3">
    <citation type="journal article" date="2000" name="RNA">
        <title>RNA location and modeling of a WD40 repeat domain within the vault.</title>
        <authorList>
            <person name="Kong L.B."/>
            <person name="Siva A.C."/>
            <person name="Kickhoefer V.A."/>
            <person name="Rome L.H."/>
            <person name="Stewart P.L."/>
        </authorList>
    </citation>
    <scope>ELECTRON CRYOMICROSCOPY (22 ANGSTROMS) OF VAULT COMPLEX AND TEP1 WD REPEATS MODELING</scope>
</reference>
<proteinExistence type="evidence at protein level"/>